<organism>
    <name type="scientific">Escherichia coli (strain 55989 / EAEC)</name>
    <dbReference type="NCBI Taxonomy" id="585055"/>
    <lineage>
        <taxon>Bacteria</taxon>
        <taxon>Pseudomonadati</taxon>
        <taxon>Pseudomonadota</taxon>
        <taxon>Gammaproteobacteria</taxon>
        <taxon>Enterobacterales</taxon>
        <taxon>Enterobacteriaceae</taxon>
        <taxon>Escherichia</taxon>
    </lineage>
</organism>
<proteinExistence type="inferred from homology"/>
<reference key="1">
    <citation type="journal article" date="2009" name="PLoS Genet.">
        <title>Organised genome dynamics in the Escherichia coli species results in highly diverse adaptive paths.</title>
        <authorList>
            <person name="Touchon M."/>
            <person name="Hoede C."/>
            <person name="Tenaillon O."/>
            <person name="Barbe V."/>
            <person name="Baeriswyl S."/>
            <person name="Bidet P."/>
            <person name="Bingen E."/>
            <person name="Bonacorsi S."/>
            <person name="Bouchier C."/>
            <person name="Bouvet O."/>
            <person name="Calteau A."/>
            <person name="Chiapello H."/>
            <person name="Clermont O."/>
            <person name="Cruveiller S."/>
            <person name="Danchin A."/>
            <person name="Diard M."/>
            <person name="Dossat C."/>
            <person name="Karoui M.E."/>
            <person name="Frapy E."/>
            <person name="Garry L."/>
            <person name="Ghigo J.M."/>
            <person name="Gilles A.M."/>
            <person name="Johnson J."/>
            <person name="Le Bouguenec C."/>
            <person name="Lescat M."/>
            <person name="Mangenot S."/>
            <person name="Martinez-Jehanne V."/>
            <person name="Matic I."/>
            <person name="Nassif X."/>
            <person name="Oztas S."/>
            <person name="Petit M.A."/>
            <person name="Pichon C."/>
            <person name="Rouy Z."/>
            <person name="Ruf C.S."/>
            <person name="Schneider D."/>
            <person name="Tourret J."/>
            <person name="Vacherie B."/>
            <person name="Vallenet D."/>
            <person name="Medigue C."/>
            <person name="Rocha E.P.C."/>
            <person name="Denamur E."/>
        </authorList>
    </citation>
    <scope>NUCLEOTIDE SEQUENCE [LARGE SCALE GENOMIC DNA]</scope>
    <source>
        <strain>55989 / EAEC</strain>
    </source>
</reference>
<feature type="chain" id="PRO_1000165885" description="Large ribosomal subunit protein uL3">
    <location>
        <begin position="1"/>
        <end position="209"/>
    </location>
</feature>
<feature type="modified residue" description="N5-methylglutamine" evidence="1">
    <location>
        <position position="150"/>
    </location>
</feature>
<accession>B7L4K9</accession>
<protein>
    <recommendedName>
        <fullName evidence="1">Large ribosomal subunit protein uL3</fullName>
    </recommendedName>
    <alternativeName>
        <fullName evidence="2">50S ribosomal protein L3</fullName>
    </alternativeName>
</protein>
<keyword id="KW-0488">Methylation</keyword>
<keyword id="KW-1185">Reference proteome</keyword>
<keyword id="KW-0687">Ribonucleoprotein</keyword>
<keyword id="KW-0689">Ribosomal protein</keyword>
<keyword id="KW-0694">RNA-binding</keyword>
<keyword id="KW-0699">rRNA-binding</keyword>
<name>RL3_ECO55</name>
<evidence type="ECO:0000255" key="1">
    <source>
        <dbReference type="HAMAP-Rule" id="MF_01325"/>
    </source>
</evidence>
<evidence type="ECO:0000305" key="2"/>
<comment type="function">
    <text evidence="1">One of the primary rRNA binding proteins, it binds directly near the 3'-end of the 23S rRNA, where it nucleates assembly of the 50S subunit.</text>
</comment>
<comment type="subunit">
    <text evidence="1">Part of the 50S ribosomal subunit. Forms a cluster with proteins L14 and L19.</text>
</comment>
<comment type="PTM">
    <text evidence="1">Methylated by PrmB.</text>
</comment>
<comment type="similarity">
    <text evidence="1">Belongs to the universal ribosomal protein uL3 family.</text>
</comment>
<gene>
    <name evidence="1" type="primary">rplC</name>
    <name type="ordered locus">EC55989_3736</name>
</gene>
<sequence>MIGLVGKKVGMTRIFTEDGVSIPVTVIEVEANRVTQVKDLANDGYRAIQVTTGAKKANRVTKPEAGHFAKAGVEAGRGLWEFRLAEGEEFTVGQSISVELFADVKKVDVTGTSKGKGFAGTVKRWNFRTQDATHGNSLSHRVPGSIGQNQTPGKVFKGKKMAGQMGNERVTVQSLDVVRVDAERNLLLVKGAVPGATGSDLIVKPAVKA</sequence>
<dbReference type="EMBL" id="CU928145">
    <property type="protein sequence ID" value="CAV00038.1"/>
    <property type="molecule type" value="Genomic_DNA"/>
</dbReference>
<dbReference type="RefSeq" id="WP_000579833.1">
    <property type="nucleotide sequence ID" value="NZ_CP028304.1"/>
</dbReference>
<dbReference type="SMR" id="B7L4K9"/>
<dbReference type="GeneID" id="86948184"/>
<dbReference type="KEGG" id="eck:EC55989_3736"/>
<dbReference type="HOGENOM" id="CLU_044142_4_1_6"/>
<dbReference type="Proteomes" id="UP000000746">
    <property type="component" value="Chromosome"/>
</dbReference>
<dbReference type="GO" id="GO:0022625">
    <property type="term" value="C:cytosolic large ribosomal subunit"/>
    <property type="evidence" value="ECO:0007669"/>
    <property type="project" value="TreeGrafter"/>
</dbReference>
<dbReference type="GO" id="GO:0019843">
    <property type="term" value="F:rRNA binding"/>
    <property type="evidence" value="ECO:0007669"/>
    <property type="project" value="UniProtKB-UniRule"/>
</dbReference>
<dbReference type="GO" id="GO:0003735">
    <property type="term" value="F:structural constituent of ribosome"/>
    <property type="evidence" value="ECO:0007669"/>
    <property type="project" value="InterPro"/>
</dbReference>
<dbReference type="GO" id="GO:0006412">
    <property type="term" value="P:translation"/>
    <property type="evidence" value="ECO:0007669"/>
    <property type="project" value="UniProtKB-UniRule"/>
</dbReference>
<dbReference type="FunFam" id="2.40.30.10:FF:000004">
    <property type="entry name" value="50S ribosomal protein L3"/>
    <property type="match status" value="1"/>
</dbReference>
<dbReference type="FunFam" id="3.30.160.810:FF:000001">
    <property type="entry name" value="50S ribosomal protein L3"/>
    <property type="match status" value="1"/>
</dbReference>
<dbReference type="Gene3D" id="3.30.160.810">
    <property type="match status" value="1"/>
</dbReference>
<dbReference type="Gene3D" id="2.40.30.10">
    <property type="entry name" value="Translation factors"/>
    <property type="match status" value="1"/>
</dbReference>
<dbReference type="HAMAP" id="MF_01325_B">
    <property type="entry name" value="Ribosomal_uL3_B"/>
    <property type="match status" value="1"/>
</dbReference>
<dbReference type="InterPro" id="IPR000597">
    <property type="entry name" value="Ribosomal_uL3"/>
</dbReference>
<dbReference type="InterPro" id="IPR019927">
    <property type="entry name" value="Ribosomal_uL3_bac/org-type"/>
</dbReference>
<dbReference type="InterPro" id="IPR019926">
    <property type="entry name" value="Ribosomal_uL3_CS"/>
</dbReference>
<dbReference type="InterPro" id="IPR009000">
    <property type="entry name" value="Transl_B-barrel_sf"/>
</dbReference>
<dbReference type="NCBIfam" id="TIGR03625">
    <property type="entry name" value="L3_bact"/>
    <property type="match status" value="1"/>
</dbReference>
<dbReference type="PANTHER" id="PTHR11229">
    <property type="entry name" value="50S RIBOSOMAL PROTEIN L3"/>
    <property type="match status" value="1"/>
</dbReference>
<dbReference type="PANTHER" id="PTHR11229:SF16">
    <property type="entry name" value="LARGE RIBOSOMAL SUBUNIT PROTEIN UL3C"/>
    <property type="match status" value="1"/>
</dbReference>
<dbReference type="Pfam" id="PF00297">
    <property type="entry name" value="Ribosomal_L3"/>
    <property type="match status" value="1"/>
</dbReference>
<dbReference type="SUPFAM" id="SSF50447">
    <property type="entry name" value="Translation proteins"/>
    <property type="match status" value="1"/>
</dbReference>
<dbReference type="PROSITE" id="PS00474">
    <property type="entry name" value="RIBOSOMAL_L3"/>
    <property type="match status" value="1"/>
</dbReference>